<sequence length="62" mass="7500">MAKGTPSFGKRNKTKTHVRCRRCGRRAYHVRKGYCAACGFGRSRRIRRYSWQNKKVNRKRRR</sequence>
<keyword id="KW-0479">Metal-binding</keyword>
<keyword id="KW-1185">Reference proteome</keyword>
<keyword id="KW-0687">Ribonucleoprotein</keyword>
<keyword id="KW-0689">Ribosomal protein</keyword>
<keyword id="KW-0694">RNA-binding</keyword>
<keyword id="KW-0699">rRNA-binding</keyword>
<keyword id="KW-0862">Zinc</keyword>
<keyword id="KW-0863">Zinc-finger</keyword>
<accession>Q8TYS1</accession>
<evidence type="ECO:0000255" key="1">
    <source>
        <dbReference type="HAMAP-Rule" id="MF_00547"/>
    </source>
</evidence>
<evidence type="ECO:0000305" key="2"/>
<comment type="function">
    <text evidence="1">Binds to the 23S rRNA.</text>
</comment>
<comment type="cofactor">
    <cofactor evidence="1">
        <name>Zn(2+)</name>
        <dbReference type="ChEBI" id="CHEBI:29105"/>
    </cofactor>
    <text evidence="1">Binds 1 zinc ion per subunit.</text>
</comment>
<comment type="similarity">
    <text evidence="1">Belongs to the eukaryotic ribosomal protein eL37 family.</text>
</comment>
<gene>
    <name evidence="1" type="primary">rpl37e</name>
    <name type="ordered locus">MK0221</name>
</gene>
<dbReference type="EMBL" id="AE009439">
    <property type="protein sequence ID" value="AAM01438.1"/>
    <property type="molecule type" value="Genomic_DNA"/>
</dbReference>
<dbReference type="SMR" id="Q8TYS1"/>
<dbReference type="FunCoup" id="Q8TYS1">
    <property type="interactions" value="108"/>
</dbReference>
<dbReference type="STRING" id="190192.MK0221"/>
<dbReference type="PaxDb" id="190192-MK0221"/>
<dbReference type="EnsemblBacteria" id="AAM01438">
    <property type="protein sequence ID" value="AAM01438"/>
    <property type="gene ID" value="MK0221"/>
</dbReference>
<dbReference type="KEGG" id="mka:MK0221"/>
<dbReference type="HOGENOM" id="CLU_208825_0_0_2"/>
<dbReference type="InParanoid" id="Q8TYS1"/>
<dbReference type="OrthoDB" id="5619at2157"/>
<dbReference type="Proteomes" id="UP000001826">
    <property type="component" value="Chromosome"/>
</dbReference>
<dbReference type="GO" id="GO:0022625">
    <property type="term" value="C:cytosolic large ribosomal subunit"/>
    <property type="evidence" value="ECO:0007669"/>
    <property type="project" value="TreeGrafter"/>
</dbReference>
<dbReference type="GO" id="GO:0019843">
    <property type="term" value="F:rRNA binding"/>
    <property type="evidence" value="ECO:0007669"/>
    <property type="project" value="UniProtKB-KW"/>
</dbReference>
<dbReference type="GO" id="GO:0003735">
    <property type="term" value="F:structural constituent of ribosome"/>
    <property type="evidence" value="ECO:0007669"/>
    <property type="project" value="InterPro"/>
</dbReference>
<dbReference type="GO" id="GO:0008270">
    <property type="term" value="F:zinc ion binding"/>
    <property type="evidence" value="ECO:0007669"/>
    <property type="project" value="UniProtKB-UniRule"/>
</dbReference>
<dbReference type="GO" id="GO:0006412">
    <property type="term" value="P:translation"/>
    <property type="evidence" value="ECO:0007669"/>
    <property type="project" value="UniProtKB-UniRule"/>
</dbReference>
<dbReference type="FunFam" id="2.20.25.30:FF:000003">
    <property type="entry name" value="50S ribosomal protein L37e"/>
    <property type="match status" value="1"/>
</dbReference>
<dbReference type="Gene3D" id="2.20.25.30">
    <property type="match status" value="1"/>
</dbReference>
<dbReference type="HAMAP" id="MF_00547">
    <property type="entry name" value="Ribosomal_eL37"/>
    <property type="match status" value="1"/>
</dbReference>
<dbReference type="InterPro" id="IPR001569">
    <property type="entry name" value="Ribosomal_eL37"/>
</dbReference>
<dbReference type="InterPro" id="IPR011331">
    <property type="entry name" value="Ribosomal_eL37/eL43"/>
</dbReference>
<dbReference type="InterPro" id="IPR018267">
    <property type="entry name" value="Ribosomal_eL37_CS"/>
</dbReference>
<dbReference type="InterPro" id="IPR011332">
    <property type="entry name" value="Ribosomal_zn-bd"/>
</dbReference>
<dbReference type="NCBIfam" id="NF003214">
    <property type="entry name" value="PRK04179.1"/>
    <property type="match status" value="1"/>
</dbReference>
<dbReference type="PANTHER" id="PTHR10768">
    <property type="entry name" value="60S RIBOSOMAL PROTEIN L37"/>
    <property type="match status" value="1"/>
</dbReference>
<dbReference type="PANTHER" id="PTHR10768:SF0">
    <property type="entry name" value="RIBOSOMAL PROTEIN L37"/>
    <property type="match status" value="1"/>
</dbReference>
<dbReference type="Pfam" id="PF01907">
    <property type="entry name" value="Ribosomal_L37e"/>
    <property type="match status" value="1"/>
</dbReference>
<dbReference type="SUPFAM" id="SSF57829">
    <property type="entry name" value="Zn-binding ribosomal proteins"/>
    <property type="match status" value="1"/>
</dbReference>
<dbReference type="PROSITE" id="PS01077">
    <property type="entry name" value="RIBOSOMAL_L37E"/>
    <property type="match status" value="1"/>
</dbReference>
<organism>
    <name type="scientific">Methanopyrus kandleri (strain AV19 / DSM 6324 / JCM 9639 / NBRC 100938)</name>
    <dbReference type="NCBI Taxonomy" id="190192"/>
    <lineage>
        <taxon>Archaea</taxon>
        <taxon>Methanobacteriati</taxon>
        <taxon>Methanobacteriota</taxon>
        <taxon>Methanomada group</taxon>
        <taxon>Methanopyri</taxon>
        <taxon>Methanopyrales</taxon>
        <taxon>Methanopyraceae</taxon>
        <taxon>Methanopyrus</taxon>
    </lineage>
</organism>
<proteinExistence type="inferred from homology"/>
<feature type="chain" id="PRO_0000139730" description="Large ribosomal subunit protein eL37">
    <location>
        <begin position="1"/>
        <end position="62"/>
    </location>
</feature>
<feature type="zinc finger region" description="C4-type" evidence="1">
    <location>
        <begin position="20"/>
        <end position="38"/>
    </location>
</feature>
<feature type="binding site" evidence="1">
    <location>
        <position position="20"/>
    </location>
    <ligand>
        <name>Zn(2+)</name>
        <dbReference type="ChEBI" id="CHEBI:29105"/>
    </ligand>
</feature>
<feature type="binding site" evidence="1">
    <location>
        <position position="23"/>
    </location>
    <ligand>
        <name>Zn(2+)</name>
        <dbReference type="ChEBI" id="CHEBI:29105"/>
    </ligand>
</feature>
<feature type="binding site" evidence="1">
    <location>
        <position position="35"/>
    </location>
    <ligand>
        <name>Zn(2+)</name>
        <dbReference type="ChEBI" id="CHEBI:29105"/>
    </ligand>
</feature>
<feature type="binding site" evidence="1">
    <location>
        <position position="38"/>
    </location>
    <ligand>
        <name>Zn(2+)</name>
        <dbReference type="ChEBI" id="CHEBI:29105"/>
    </ligand>
</feature>
<name>RL37_METKA</name>
<reference key="1">
    <citation type="journal article" date="2002" name="Proc. Natl. Acad. Sci. U.S.A.">
        <title>The complete genome of hyperthermophile Methanopyrus kandleri AV19 and monophyly of archaeal methanogens.</title>
        <authorList>
            <person name="Slesarev A.I."/>
            <person name="Mezhevaya K.V."/>
            <person name="Makarova K.S."/>
            <person name="Polushin N.N."/>
            <person name="Shcherbinina O.V."/>
            <person name="Shakhova V.V."/>
            <person name="Belova G.I."/>
            <person name="Aravind L."/>
            <person name="Natale D.A."/>
            <person name="Rogozin I.B."/>
            <person name="Tatusov R.L."/>
            <person name="Wolf Y.I."/>
            <person name="Stetter K.O."/>
            <person name="Malykh A.G."/>
            <person name="Koonin E.V."/>
            <person name="Kozyavkin S.A."/>
        </authorList>
    </citation>
    <scope>NUCLEOTIDE SEQUENCE [LARGE SCALE GENOMIC DNA]</scope>
    <source>
        <strain>AV19 / DSM 6324 / JCM 9639 / NBRC 100938</strain>
    </source>
</reference>
<protein>
    <recommendedName>
        <fullName evidence="1">Large ribosomal subunit protein eL37</fullName>
    </recommendedName>
    <alternativeName>
        <fullName evidence="2">50S ribosomal protein L37e</fullName>
    </alternativeName>
</protein>